<name>ACCA_CHLPD</name>
<proteinExistence type="inferred from homology"/>
<keyword id="KW-0067">ATP-binding</keyword>
<keyword id="KW-0963">Cytoplasm</keyword>
<keyword id="KW-0275">Fatty acid biosynthesis</keyword>
<keyword id="KW-0276">Fatty acid metabolism</keyword>
<keyword id="KW-0444">Lipid biosynthesis</keyword>
<keyword id="KW-0443">Lipid metabolism</keyword>
<keyword id="KW-0547">Nucleotide-binding</keyword>
<keyword id="KW-1185">Reference proteome</keyword>
<keyword id="KW-0808">Transferase</keyword>
<evidence type="ECO:0000255" key="1">
    <source>
        <dbReference type="HAMAP-Rule" id="MF_00823"/>
    </source>
</evidence>
<evidence type="ECO:0000255" key="2">
    <source>
        <dbReference type="PROSITE-ProRule" id="PRU01137"/>
    </source>
</evidence>
<feature type="chain" id="PRO_1000062604" description="Acetyl-coenzyme A carboxylase carboxyl transferase subunit alpha">
    <location>
        <begin position="1"/>
        <end position="333"/>
    </location>
</feature>
<feature type="domain" description="CoA carboxyltransferase C-terminal" evidence="2">
    <location>
        <begin position="48"/>
        <end position="308"/>
    </location>
</feature>
<accession>A1BD29</accession>
<protein>
    <recommendedName>
        <fullName evidence="1">Acetyl-coenzyme A carboxylase carboxyl transferase subunit alpha</fullName>
        <shortName evidence="1">ACCase subunit alpha</shortName>
        <shortName evidence="1">Acetyl-CoA carboxylase carboxyltransferase subunit alpha</shortName>
        <ecNumber evidence="1">2.1.3.15</ecNumber>
    </recommendedName>
</protein>
<gene>
    <name evidence="1" type="primary">accA</name>
    <name type="ordered locus">Cpha266_0239</name>
</gene>
<comment type="function">
    <text evidence="1">Component of the acetyl coenzyme A carboxylase (ACC) complex. First, biotin carboxylase catalyzes the carboxylation of biotin on its carrier protein (BCCP) and then the CO(2) group is transferred by the carboxyltransferase to acetyl-CoA to form malonyl-CoA.</text>
</comment>
<comment type="catalytic activity">
    <reaction evidence="1">
        <text>N(6)-carboxybiotinyl-L-lysyl-[protein] + acetyl-CoA = N(6)-biotinyl-L-lysyl-[protein] + malonyl-CoA</text>
        <dbReference type="Rhea" id="RHEA:54728"/>
        <dbReference type="Rhea" id="RHEA-COMP:10505"/>
        <dbReference type="Rhea" id="RHEA-COMP:10506"/>
        <dbReference type="ChEBI" id="CHEBI:57288"/>
        <dbReference type="ChEBI" id="CHEBI:57384"/>
        <dbReference type="ChEBI" id="CHEBI:83144"/>
        <dbReference type="ChEBI" id="CHEBI:83145"/>
        <dbReference type="EC" id="2.1.3.15"/>
    </reaction>
</comment>
<comment type="pathway">
    <text evidence="1">Lipid metabolism; malonyl-CoA biosynthesis; malonyl-CoA from acetyl-CoA: step 1/1.</text>
</comment>
<comment type="subunit">
    <text evidence="1">Acetyl-CoA carboxylase is a heterohexamer composed of biotin carboxyl carrier protein (AccB), biotin carboxylase (AccC) and two subunits each of ACCase subunit alpha (AccA) and ACCase subunit beta (AccD).</text>
</comment>
<comment type="subcellular location">
    <subcellularLocation>
        <location evidence="1">Cytoplasm</location>
    </subcellularLocation>
</comment>
<comment type="similarity">
    <text evidence="1">Belongs to the AccA family.</text>
</comment>
<organism>
    <name type="scientific">Chlorobium phaeobacteroides (strain DSM 266 / SMG 266 / 2430)</name>
    <dbReference type="NCBI Taxonomy" id="290317"/>
    <lineage>
        <taxon>Bacteria</taxon>
        <taxon>Pseudomonadati</taxon>
        <taxon>Chlorobiota</taxon>
        <taxon>Chlorobiia</taxon>
        <taxon>Chlorobiales</taxon>
        <taxon>Chlorobiaceae</taxon>
        <taxon>Chlorobium/Pelodictyon group</taxon>
        <taxon>Chlorobium</taxon>
    </lineage>
</organism>
<sequence length="333" mass="37616">MANRVVLDFEKPLFELEAKLEEMRVYLRNSSRDQDSSDQDVLNREIEALEVKVETLRRSIYKNLTRWQKVQLARHAERPFTLDYIYMMTRDFVEMAGDRYFSDDKAIVGGFAILEDIPSGFSQPVMIIGHQKGRDTKSNLYRNFGMAQPEGYRKALRLMKLAEKFNKPVITLIDTPGAFPGIEAEERGQAEAIARNLFEMARLTVPVICVIVGEGASGGAIGLGVGNRILMAENSWYSVISPESCSSILWRSWNYKEQAAEALQPTAEDLLAQGIIDRIIPEPMGGAHTDPEAMAGTLKEMLIEELRILMSKESDVLVRERVEKFSGMGVWDE</sequence>
<reference key="1">
    <citation type="submission" date="2006-12" db="EMBL/GenBank/DDBJ databases">
        <title>Complete sequence of Chlorobium phaeobacteroides DSM 266.</title>
        <authorList>
            <consortium name="US DOE Joint Genome Institute"/>
            <person name="Copeland A."/>
            <person name="Lucas S."/>
            <person name="Lapidus A."/>
            <person name="Barry K."/>
            <person name="Detter J.C."/>
            <person name="Glavina del Rio T."/>
            <person name="Hammon N."/>
            <person name="Israni S."/>
            <person name="Pitluck S."/>
            <person name="Goltsman E."/>
            <person name="Schmutz J."/>
            <person name="Larimer F."/>
            <person name="Land M."/>
            <person name="Hauser L."/>
            <person name="Mikhailova N."/>
            <person name="Li T."/>
            <person name="Overmann J."/>
            <person name="Bryant D.A."/>
            <person name="Richardson P."/>
        </authorList>
    </citation>
    <scope>NUCLEOTIDE SEQUENCE [LARGE SCALE GENOMIC DNA]</scope>
    <source>
        <strain>DSM 266 / SMG 266 / 2430</strain>
    </source>
</reference>
<dbReference type="EC" id="2.1.3.15" evidence="1"/>
<dbReference type="EMBL" id="CP000492">
    <property type="protein sequence ID" value="ABL64306.1"/>
    <property type="molecule type" value="Genomic_DNA"/>
</dbReference>
<dbReference type="RefSeq" id="WP_011744146.1">
    <property type="nucleotide sequence ID" value="NC_008639.1"/>
</dbReference>
<dbReference type="SMR" id="A1BD29"/>
<dbReference type="STRING" id="290317.Cpha266_0239"/>
<dbReference type="KEGG" id="cph:Cpha266_0239"/>
<dbReference type="eggNOG" id="COG0825">
    <property type="taxonomic scope" value="Bacteria"/>
</dbReference>
<dbReference type="HOGENOM" id="CLU_015486_0_2_10"/>
<dbReference type="OrthoDB" id="9808023at2"/>
<dbReference type="UniPathway" id="UPA00655">
    <property type="reaction ID" value="UER00711"/>
</dbReference>
<dbReference type="Proteomes" id="UP000008701">
    <property type="component" value="Chromosome"/>
</dbReference>
<dbReference type="GO" id="GO:0009317">
    <property type="term" value="C:acetyl-CoA carboxylase complex"/>
    <property type="evidence" value="ECO:0007669"/>
    <property type="project" value="InterPro"/>
</dbReference>
<dbReference type="GO" id="GO:0003989">
    <property type="term" value="F:acetyl-CoA carboxylase activity"/>
    <property type="evidence" value="ECO:0007669"/>
    <property type="project" value="InterPro"/>
</dbReference>
<dbReference type="GO" id="GO:0005524">
    <property type="term" value="F:ATP binding"/>
    <property type="evidence" value="ECO:0007669"/>
    <property type="project" value="UniProtKB-KW"/>
</dbReference>
<dbReference type="GO" id="GO:0016743">
    <property type="term" value="F:carboxyl- or carbamoyltransferase activity"/>
    <property type="evidence" value="ECO:0007669"/>
    <property type="project" value="UniProtKB-UniRule"/>
</dbReference>
<dbReference type="GO" id="GO:0006633">
    <property type="term" value="P:fatty acid biosynthetic process"/>
    <property type="evidence" value="ECO:0007669"/>
    <property type="project" value="UniProtKB-KW"/>
</dbReference>
<dbReference type="GO" id="GO:2001295">
    <property type="term" value="P:malonyl-CoA biosynthetic process"/>
    <property type="evidence" value="ECO:0007669"/>
    <property type="project" value="UniProtKB-UniRule"/>
</dbReference>
<dbReference type="Gene3D" id="3.90.226.10">
    <property type="entry name" value="2-enoyl-CoA Hydratase, Chain A, domain 1"/>
    <property type="match status" value="1"/>
</dbReference>
<dbReference type="HAMAP" id="MF_00823">
    <property type="entry name" value="AcetylCoA_CT_alpha"/>
    <property type="match status" value="1"/>
</dbReference>
<dbReference type="InterPro" id="IPR001095">
    <property type="entry name" value="Acetyl_CoA_COase_a_su"/>
</dbReference>
<dbReference type="InterPro" id="IPR029045">
    <property type="entry name" value="ClpP/crotonase-like_dom_sf"/>
</dbReference>
<dbReference type="InterPro" id="IPR011763">
    <property type="entry name" value="COA_CT_C"/>
</dbReference>
<dbReference type="NCBIfam" id="TIGR00513">
    <property type="entry name" value="accA"/>
    <property type="match status" value="1"/>
</dbReference>
<dbReference type="NCBIfam" id="NF041504">
    <property type="entry name" value="AccA_sub"/>
    <property type="match status" value="1"/>
</dbReference>
<dbReference type="NCBIfam" id="NF004344">
    <property type="entry name" value="PRK05724.1"/>
    <property type="match status" value="1"/>
</dbReference>
<dbReference type="PANTHER" id="PTHR42853">
    <property type="entry name" value="ACETYL-COENZYME A CARBOXYLASE CARBOXYL TRANSFERASE SUBUNIT ALPHA"/>
    <property type="match status" value="1"/>
</dbReference>
<dbReference type="PANTHER" id="PTHR42853:SF3">
    <property type="entry name" value="ACETYL-COENZYME A CARBOXYLASE CARBOXYL TRANSFERASE SUBUNIT ALPHA, CHLOROPLASTIC"/>
    <property type="match status" value="1"/>
</dbReference>
<dbReference type="Pfam" id="PF03255">
    <property type="entry name" value="ACCA"/>
    <property type="match status" value="1"/>
</dbReference>
<dbReference type="PRINTS" id="PR01069">
    <property type="entry name" value="ACCCTRFRASEA"/>
</dbReference>
<dbReference type="SUPFAM" id="SSF52096">
    <property type="entry name" value="ClpP/crotonase"/>
    <property type="match status" value="1"/>
</dbReference>
<dbReference type="PROSITE" id="PS50989">
    <property type="entry name" value="COA_CT_CTER"/>
    <property type="match status" value="1"/>
</dbReference>